<evidence type="ECO:0000255" key="1">
    <source>
        <dbReference type="HAMAP-Rule" id="MF_00181"/>
    </source>
</evidence>
<organism>
    <name type="scientific">Acaryochloris marina (strain MBIC 11017)</name>
    <dbReference type="NCBI Taxonomy" id="329726"/>
    <lineage>
        <taxon>Bacteria</taxon>
        <taxon>Bacillati</taxon>
        <taxon>Cyanobacteriota</taxon>
        <taxon>Cyanophyceae</taxon>
        <taxon>Acaryochloridales</taxon>
        <taxon>Acaryochloridaceae</taxon>
        <taxon>Acaryochloris</taxon>
    </lineage>
</organism>
<sequence>MKIQAIETVAADWSGDYLGIGFFEDSAAIDAGLTQLDQSLQDILQDLVSETEFQGKVGEQPWTRIAGPGSIRKVMLIGLGSPDAFTLDSLRQAAAAFAKAAQKQKAASAGLQLPSWDDDAAASTQAMAEGIELALHQEIRFKSDPDAKKPGEFPQEVHLLGLANQAAAIEKAQQICAGVILTRELVAAPANVVTPSALAETAAQIAEDHGLTLEVLEREECEAQGMGAFLGVSLASELPPKFIHLTYKPSGTPRRKLAIVGKGVTFDSGGLNLKVGGSGIETMKMDMAGSGATLGAAKAIGQLKPDVEVHFIVAAAENMISGHALHPGDILTASNGKTIEINNTDAEGRLTLADALVFAEKQGVDAIVDLATLTGACIVALGNDIAGMWTPEDSLAEELSQASEQAGEKFWRMPLEEKYFEGLKSPIADMKNTGPRPGGSITAALFLKQYIENTPWAHLDVAGPVWTEKENGYLNVGATGFAVRTLVNWVMG</sequence>
<gene>
    <name evidence="1" type="primary">pepA</name>
    <name type="ordered locus">AM1_2989</name>
</gene>
<reference key="1">
    <citation type="journal article" date="2008" name="Proc. Natl. Acad. Sci. U.S.A.">
        <title>Niche adaptation and genome expansion in the chlorophyll d-producing cyanobacterium Acaryochloris marina.</title>
        <authorList>
            <person name="Swingley W.D."/>
            <person name="Chen M."/>
            <person name="Cheung P.C."/>
            <person name="Conrad A.L."/>
            <person name="Dejesa L.C."/>
            <person name="Hao J."/>
            <person name="Honchak B.M."/>
            <person name="Karbach L.E."/>
            <person name="Kurdoglu A."/>
            <person name="Lahiri S."/>
            <person name="Mastrian S.D."/>
            <person name="Miyashita H."/>
            <person name="Page L."/>
            <person name="Ramakrishna P."/>
            <person name="Satoh S."/>
            <person name="Sattley W.M."/>
            <person name="Shimada Y."/>
            <person name="Taylor H.L."/>
            <person name="Tomo T."/>
            <person name="Tsuchiya T."/>
            <person name="Wang Z.T."/>
            <person name="Raymond J."/>
            <person name="Mimuro M."/>
            <person name="Blankenship R.E."/>
            <person name="Touchman J.W."/>
        </authorList>
    </citation>
    <scope>NUCLEOTIDE SEQUENCE [LARGE SCALE GENOMIC DNA]</scope>
    <source>
        <strain>MBIC 11017</strain>
    </source>
</reference>
<dbReference type="EC" id="3.4.11.1" evidence="1"/>
<dbReference type="EC" id="3.4.11.10" evidence="1"/>
<dbReference type="EMBL" id="CP000828">
    <property type="protein sequence ID" value="ABW27985.1"/>
    <property type="molecule type" value="Genomic_DNA"/>
</dbReference>
<dbReference type="RefSeq" id="WP_012163418.1">
    <property type="nucleotide sequence ID" value="NC_009925.1"/>
</dbReference>
<dbReference type="SMR" id="B0CCF6"/>
<dbReference type="STRING" id="329726.AM1_2989"/>
<dbReference type="MEROPS" id="M17.A03"/>
<dbReference type="KEGG" id="amr:AM1_2989"/>
<dbReference type="eggNOG" id="COG0260">
    <property type="taxonomic scope" value="Bacteria"/>
</dbReference>
<dbReference type="HOGENOM" id="CLU_013734_5_1_3"/>
<dbReference type="OrthoDB" id="9809354at2"/>
<dbReference type="Proteomes" id="UP000000268">
    <property type="component" value="Chromosome"/>
</dbReference>
<dbReference type="GO" id="GO:0005737">
    <property type="term" value="C:cytoplasm"/>
    <property type="evidence" value="ECO:0007669"/>
    <property type="project" value="UniProtKB-SubCell"/>
</dbReference>
<dbReference type="GO" id="GO:0030145">
    <property type="term" value="F:manganese ion binding"/>
    <property type="evidence" value="ECO:0007669"/>
    <property type="project" value="UniProtKB-UniRule"/>
</dbReference>
<dbReference type="GO" id="GO:0070006">
    <property type="term" value="F:metalloaminopeptidase activity"/>
    <property type="evidence" value="ECO:0007669"/>
    <property type="project" value="InterPro"/>
</dbReference>
<dbReference type="GO" id="GO:0006508">
    <property type="term" value="P:proteolysis"/>
    <property type="evidence" value="ECO:0007669"/>
    <property type="project" value="UniProtKB-KW"/>
</dbReference>
<dbReference type="CDD" id="cd00433">
    <property type="entry name" value="Peptidase_M17"/>
    <property type="match status" value="1"/>
</dbReference>
<dbReference type="Gene3D" id="3.40.220.10">
    <property type="entry name" value="Leucine Aminopeptidase, subunit E, domain 1"/>
    <property type="match status" value="1"/>
</dbReference>
<dbReference type="Gene3D" id="3.40.630.10">
    <property type="entry name" value="Zn peptidases"/>
    <property type="match status" value="1"/>
</dbReference>
<dbReference type="HAMAP" id="MF_00181">
    <property type="entry name" value="Cytosol_peptidase_M17"/>
    <property type="match status" value="1"/>
</dbReference>
<dbReference type="InterPro" id="IPR011356">
    <property type="entry name" value="Leucine_aapep/pepB"/>
</dbReference>
<dbReference type="InterPro" id="IPR043472">
    <property type="entry name" value="Macro_dom-like"/>
</dbReference>
<dbReference type="InterPro" id="IPR000819">
    <property type="entry name" value="Peptidase_M17_C"/>
</dbReference>
<dbReference type="InterPro" id="IPR023042">
    <property type="entry name" value="Peptidase_M17_leu_NH2_pept"/>
</dbReference>
<dbReference type="InterPro" id="IPR008283">
    <property type="entry name" value="Peptidase_M17_N"/>
</dbReference>
<dbReference type="NCBIfam" id="NF002073">
    <property type="entry name" value="PRK00913.1-2"/>
    <property type="match status" value="1"/>
</dbReference>
<dbReference type="NCBIfam" id="NF002074">
    <property type="entry name" value="PRK00913.1-4"/>
    <property type="match status" value="1"/>
</dbReference>
<dbReference type="NCBIfam" id="NF002076">
    <property type="entry name" value="PRK00913.2-3"/>
    <property type="match status" value="1"/>
</dbReference>
<dbReference type="NCBIfam" id="NF002083">
    <property type="entry name" value="PRK00913.3-5"/>
    <property type="match status" value="1"/>
</dbReference>
<dbReference type="PANTHER" id="PTHR11963:SF23">
    <property type="entry name" value="CYTOSOL AMINOPEPTIDASE"/>
    <property type="match status" value="1"/>
</dbReference>
<dbReference type="PANTHER" id="PTHR11963">
    <property type="entry name" value="LEUCINE AMINOPEPTIDASE-RELATED"/>
    <property type="match status" value="1"/>
</dbReference>
<dbReference type="Pfam" id="PF00883">
    <property type="entry name" value="Peptidase_M17"/>
    <property type="match status" value="1"/>
</dbReference>
<dbReference type="Pfam" id="PF02789">
    <property type="entry name" value="Peptidase_M17_N"/>
    <property type="match status" value="1"/>
</dbReference>
<dbReference type="PRINTS" id="PR00481">
    <property type="entry name" value="LAMNOPPTDASE"/>
</dbReference>
<dbReference type="SUPFAM" id="SSF52949">
    <property type="entry name" value="Macro domain-like"/>
    <property type="match status" value="1"/>
</dbReference>
<dbReference type="SUPFAM" id="SSF53187">
    <property type="entry name" value="Zn-dependent exopeptidases"/>
    <property type="match status" value="1"/>
</dbReference>
<dbReference type="PROSITE" id="PS00631">
    <property type="entry name" value="CYTOSOL_AP"/>
    <property type="match status" value="1"/>
</dbReference>
<accession>B0CCF6</accession>
<proteinExistence type="inferred from homology"/>
<comment type="function">
    <text evidence="1">Presumably involved in the processing and regular turnover of intracellular proteins. Catalyzes the removal of unsubstituted N-terminal amino acids from various peptides.</text>
</comment>
<comment type="catalytic activity">
    <reaction evidence="1">
        <text>Release of an N-terminal amino acid, Xaa-|-Yaa-, in which Xaa is preferably Leu, but may be other amino acids including Pro although not Arg or Lys, and Yaa may be Pro. Amino acid amides and methyl esters are also readily hydrolyzed, but rates on arylamides are exceedingly low.</text>
        <dbReference type="EC" id="3.4.11.1"/>
    </reaction>
</comment>
<comment type="catalytic activity">
    <reaction evidence="1">
        <text>Release of an N-terminal amino acid, preferentially leucine, but not glutamic or aspartic acids.</text>
        <dbReference type="EC" id="3.4.11.10"/>
    </reaction>
</comment>
<comment type="cofactor">
    <cofactor evidence="1">
        <name>Mn(2+)</name>
        <dbReference type="ChEBI" id="CHEBI:29035"/>
    </cofactor>
    <text evidence="1">Binds 2 manganese ions per subunit.</text>
</comment>
<comment type="subcellular location">
    <subcellularLocation>
        <location evidence="1">Cytoplasm</location>
    </subcellularLocation>
</comment>
<comment type="similarity">
    <text evidence="1">Belongs to the peptidase M17 family.</text>
</comment>
<feature type="chain" id="PRO_1000077272" description="Probable cytosol aminopeptidase">
    <location>
        <begin position="1"/>
        <end position="492"/>
    </location>
</feature>
<feature type="active site" evidence="1">
    <location>
        <position position="274"/>
    </location>
</feature>
<feature type="active site" evidence="1">
    <location>
        <position position="349"/>
    </location>
</feature>
<feature type="binding site" evidence="1">
    <location>
        <position position="262"/>
    </location>
    <ligand>
        <name>Mn(2+)</name>
        <dbReference type="ChEBI" id="CHEBI:29035"/>
        <label>2</label>
    </ligand>
</feature>
<feature type="binding site" evidence="1">
    <location>
        <position position="267"/>
    </location>
    <ligand>
        <name>Mn(2+)</name>
        <dbReference type="ChEBI" id="CHEBI:29035"/>
        <label>1</label>
    </ligand>
</feature>
<feature type="binding site" evidence="1">
    <location>
        <position position="267"/>
    </location>
    <ligand>
        <name>Mn(2+)</name>
        <dbReference type="ChEBI" id="CHEBI:29035"/>
        <label>2</label>
    </ligand>
</feature>
<feature type="binding site" evidence="1">
    <location>
        <position position="286"/>
    </location>
    <ligand>
        <name>Mn(2+)</name>
        <dbReference type="ChEBI" id="CHEBI:29035"/>
        <label>2</label>
    </ligand>
</feature>
<feature type="binding site" evidence="1">
    <location>
        <position position="345"/>
    </location>
    <ligand>
        <name>Mn(2+)</name>
        <dbReference type="ChEBI" id="CHEBI:29035"/>
        <label>1</label>
    </ligand>
</feature>
<feature type="binding site" evidence="1">
    <location>
        <position position="347"/>
    </location>
    <ligand>
        <name>Mn(2+)</name>
        <dbReference type="ChEBI" id="CHEBI:29035"/>
        <label>1</label>
    </ligand>
</feature>
<feature type="binding site" evidence="1">
    <location>
        <position position="347"/>
    </location>
    <ligand>
        <name>Mn(2+)</name>
        <dbReference type="ChEBI" id="CHEBI:29035"/>
        <label>2</label>
    </ligand>
</feature>
<keyword id="KW-0031">Aminopeptidase</keyword>
<keyword id="KW-0963">Cytoplasm</keyword>
<keyword id="KW-0378">Hydrolase</keyword>
<keyword id="KW-0464">Manganese</keyword>
<keyword id="KW-0479">Metal-binding</keyword>
<keyword id="KW-0645">Protease</keyword>
<keyword id="KW-1185">Reference proteome</keyword>
<protein>
    <recommendedName>
        <fullName evidence="1">Probable cytosol aminopeptidase</fullName>
        <ecNumber evidence="1">3.4.11.1</ecNumber>
    </recommendedName>
    <alternativeName>
        <fullName evidence="1">Leucine aminopeptidase</fullName>
        <shortName evidence="1">LAP</shortName>
        <ecNumber evidence="1">3.4.11.10</ecNumber>
    </alternativeName>
    <alternativeName>
        <fullName evidence="1">Leucyl aminopeptidase</fullName>
    </alternativeName>
</protein>
<name>AMPA_ACAM1</name>